<feature type="chain" id="PRO_1000094006" description="4-hydroxy-tetrahydrodipicolinate reductase">
    <location>
        <begin position="1"/>
        <end position="240"/>
    </location>
</feature>
<feature type="active site" description="Proton donor/acceptor" evidence="1">
    <location>
        <position position="135"/>
    </location>
</feature>
<feature type="active site" description="Proton donor" evidence="1">
    <location>
        <position position="139"/>
    </location>
</feature>
<feature type="binding site" evidence="1">
    <location>
        <begin position="79"/>
        <end position="81"/>
    </location>
    <ligand>
        <name>NAD(+)</name>
        <dbReference type="ChEBI" id="CHEBI:57540"/>
    </ligand>
</feature>
<feature type="binding site" evidence="1">
    <location>
        <begin position="103"/>
        <end position="106"/>
    </location>
    <ligand>
        <name>NAD(+)</name>
        <dbReference type="ChEBI" id="CHEBI:57540"/>
    </ligand>
</feature>
<feature type="binding site" evidence="1">
    <location>
        <position position="136"/>
    </location>
    <ligand>
        <name>(S)-2,3,4,5-tetrahydrodipicolinate</name>
        <dbReference type="ChEBI" id="CHEBI:16845"/>
    </ligand>
</feature>
<feature type="binding site" evidence="1">
    <location>
        <begin position="145"/>
        <end position="146"/>
    </location>
    <ligand>
        <name>(S)-2,3,4,5-tetrahydrodipicolinate</name>
        <dbReference type="ChEBI" id="CHEBI:16845"/>
    </ligand>
</feature>
<comment type="function">
    <text evidence="1">Catalyzes the conversion of 4-hydroxy-tetrahydrodipicolinate (HTPA) to tetrahydrodipicolinate.</text>
</comment>
<comment type="catalytic activity">
    <reaction evidence="1">
        <text>(S)-2,3,4,5-tetrahydrodipicolinate + NAD(+) + H2O = (2S,4S)-4-hydroxy-2,3,4,5-tetrahydrodipicolinate + NADH + H(+)</text>
        <dbReference type="Rhea" id="RHEA:35323"/>
        <dbReference type="ChEBI" id="CHEBI:15377"/>
        <dbReference type="ChEBI" id="CHEBI:15378"/>
        <dbReference type="ChEBI" id="CHEBI:16845"/>
        <dbReference type="ChEBI" id="CHEBI:57540"/>
        <dbReference type="ChEBI" id="CHEBI:57945"/>
        <dbReference type="ChEBI" id="CHEBI:67139"/>
        <dbReference type="EC" id="1.17.1.8"/>
    </reaction>
</comment>
<comment type="catalytic activity">
    <reaction evidence="1">
        <text>(S)-2,3,4,5-tetrahydrodipicolinate + NADP(+) + H2O = (2S,4S)-4-hydroxy-2,3,4,5-tetrahydrodipicolinate + NADPH + H(+)</text>
        <dbReference type="Rhea" id="RHEA:35331"/>
        <dbReference type="ChEBI" id="CHEBI:15377"/>
        <dbReference type="ChEBI" id="CHEBI:15378"/>
        <dbReference type="ChEBI" id="CHEBI:16845"/>
        <dbReference type="ChEBI" id="CHEBI:57783"/>
        <dbReference type="ChEBI" id="CHEBI:58349"/>
        <dbReference type="ChEBI" id="CHEBI:67139"/>
        <dbReference type="EC" id="1.17.1.8"/>
    </reaction>
</comment>
<comment type="pathway">
    <text evidence="1">Amino-acid biosynthesis; L-lysine biosynthesis via DAP pathway; (S)-tetrahydrodipicolinate from L-aspartate: step 4/4.</text>
</comment>
<comment type="subcellular location">
    <subcellularLocation>
        <location evidence="1">Cytoplasm</location>
    </subcellularLocation>
</comment>
<comment type="similarity">
    <text evidence="1">Belongs to the DapB family.</text>
</comment>
<comment type="caution">
    <text evidence="2">Was originally thought to be a dihydrodipicolinate reductase (DHDPR), catalyzing the conversion of dihydrodipicolinate to tetrahydrodipicolinate. However, it was shown in E.coli that the substrate of the enzymatic reaction is not dihydrodipicolinate (DHDP) but in fact (2S,4S)-4-hydroxy-2,3,4,5-tetrahydrodipicolinic acid (HTPA), the product released by the DapA-catalyzed reaction.</text>
</comment>
<proteinExistence type="inferred from homology"/>
<name>DAPB_STAA9</name>
<sequence length="240" mass="26708">MKILLIGYGAMNQRVARLAEEKGHEIVGVIENTPKATTPYQQYQHIADVKDADVAIDFSNPNLLFPLLDEEFHLPLVVATTGEKEKLLNKLDELSQNIPVFFSANMSYGVHALTKILAAAVPLLDDFDIELTEAHHNKKVDAPSGTLEKLYDVIVSLKENVTPVYDRHELNEKRQPQDIGIHSIRGGTIVGEHEVLFAGTDETIQITHRAQSKDIFANGAIQAAERLVNKPNGFYTFDNL</sequence>
<gene>
    <name evidence="1" type="primary">dapB</name>
    <name type="ordered locus">SaurJH9_1457</name>
</gene>
<evidence type="ECO:0000255" key="1">
    <source>
        <dbReference type="HAMAP-Rule" id="MF_00102"/>
    </source>
</evidence>
<evidence type="ECO:0000305" key="2"/>
<reference key="1">
    <citation type="submission" date="2007-05" db="EMBL/GenBank/DDBJ databases">
        <title>Complete sequence of chromosome of Staphylococcus aureus subsp. aureus JH9.</title>
        <authorList>
            <consortium name="US DOE Joint Genome Institute"/>
            <person name="Copeland A."/>
            <person name="Lucas S."/>
            <person name="Lapidus A."/>
            <person name="Barry K."/>
            <person name="Detter J.C."/>
            <person name="Glavina del Rio T."/>
            <person name="Hammon N."/>
            <person name="Israni S."/>
            <person name="Pitluck S."/>
            <person name="Chain P."/>
            <person name="Malfatti S."/>
            <person name="Shin M."/>
            <person name="Vergez L."/>
            <person name="Schmutz J."/>
            <person name="Larimer F."/>
            <person name="Land M."/>
            <person name="Hauser L."/>
            <person name="Kyrpides N."/>
            <person name="Kim E."/>
            <person name="Tomasz A."/>
            <person name="Richardson P."/>
        </authorList>
    </citation>
    <scope>NUCLEOTIDE SEQUENCE [LARGE SCALE GENOMIC DNA]</scope>
    <source>
        <strain>JH9</strain>
    </source>
</reference>
<keyword id="KW-0028">Amino-acid biosynthesis</keyword>
<keyword id="KW-0963">Cytoplasm</keyword>
<keyword id="KW-0220">Diaminopimelate biosynthesis</keyword>
<keyword id="KW-0457">Lysine biosynthesis</keyword>
<keyword id="KW-0520">NAD</keyword>
<keyword id="KW-0521">NADP</keyword>
<keyword id="KW-0560">Oxidoreductase</keyword>
<protein>
    <recommendedName>
        <fullName evidence="1">4-hydroxy-tetrahydrodipicolinate reductase</fullName>
        <shortName evidence="1">HTPA reductase</shortName>
        <ecNumber evidence="1">1.17.1.8</ecNumber>
    </recommendedName>
</protein>
<accession>A5ISS8</accession>
<dbReference type="EC" id="1.17.1.8" evidence="1"/>
<dbReference type="EMBL" id="CP000703">
    <property type="protein sequence ID" value="ABQ49251.1"/>
    <property type="molecule type" value="Genomic_DNA"/>
</dbReference>
<dbReference type="RefSeq" id="WP_000698228.1">
    <property type="nucleotide sequence ID" value="NC_009487.1"/>
</dbReference>
<dbReference type="SMR" id="A5ISS8"/>
<dbReference type="KEGG" id="saj:SaurJH9_1457"/>
<dbReference type="HOGENOM" id="CLU_047479_2_2_9"/>
<dbReference type="UniPathway" id="UPA00034">
    <property type="reaction ID" value="UER00018"/>
</dbReference>
<dbReference type="GO" id="GO:0005829">
    <property type="term" value="C:cytosol"/>
    <property type="evidence" value="ECO:0007669"/>
    <property type="project" value="TreeGrafter"/>
</dbReference>
<dbReference type="GO" id="GO:0008839">
    <property type="term" value="F:4-hydroxy-tetrahydrodipicolinate reductase"/>
    <property type="evidence" value="ECO:0007669"/>
    <property type="project" value="UniProtKB-EC"/>
</dbReference>
<dbReference type="GO" id="GO:0051287">
    <property type="term" value="F:NAD binding"/>
    <property type="evidence" value="ECO:0007669"/>
    <property type="project" value="UniProtKB-UniRule"/>
</dbReference>
<dbReference type="GO" id="GO:0050661">
    <property type="term" value="F:NADP binding"/>
    <property type="evidence" value="ECO:0007669"/>
    <property type="project" value="UniProtKB-UniRule"/>
</dbReference>
<dbReference type="GO" id="GO:0016726">
    <property type="term" value="F:oxidoreductase activity, acting on CH or CH2 groups, NAD or NADP as acceptor"/>
    <property type="evidence" value="ECO:0007669"/>
    <property type="project" value="UniProtKB-UniRule"/>
</dbReference>
<dbReference type="GO" id="GO:0019877">
    <property type="term" value="P:diaminopimelate biosynthetic process"/>
    <property type="evidence" value="ECO:0007669"/>
    <property type="project" value="UniProtKB-UniRule"/>
</dbReference>
<dbReference type="GO" id="GO:0009089">
    <property type="term" value="P:lysine biosynthetic process via diaminopimelate"/>
    <property type="evidence" value="ECO:0007669"/>
    <property type="project" value="UniProtKB-UniRule"/>
</dbReference>
<dbReference type="CDD" id="cd02274">
    <property type="entry name" value="DHDPR_N"/>
    <property type="match status" value="1"/>
</dbReference>
<dbReference type="FunFam" id="3.30.360.10:FF:000009">
    <property type="entry name" value="4-hydroxy-tetrahydrodipicolinate reductase"/>
    <property type="match status" value="1"/>
</dbReference>
<dbReference type="Gene3D" id="3.30.360.10">
    <property type="entry name" value="Dihydrodipicolinate Reductase, domain 2"/>
    <property type="match status" value="1"/>
</dbReference>
<dbReference type="Gene3D" id="3.40.50.720">
    <property type="entry name" value="NAD(P)-binding Rossmann-like Domain"/>
    <property type="match status" value="1"/>
</dbReference>
<dbReference type="HAMAP" id="MF_00102">
    <property type="entry name" value="DapB"/>
    <property type="match status" value="1"/>
</dbReference>
<dbReference type="InterPro" id="IPR022663">
    <property type="entry name" value="DapB_C"/>
</dbReference>
<dbReference type="InterPro" id="IPR000846">
    <property type="entry name" value="DapB_N"/>
</dbReference>
<dbReference type="InterPro" id="IPR022664">
    <property type="entry name" value="DapB_N_CS"/>
</dbReference>
<dbReference type="InterPro" id="IPR023940">
    <property type="entry name" value="DHDPR_bac"/>
</dbReference>
<dbReference type="InterPro" id="IPR036291">
    <property type="entry name" value="NAD(P)-bd_dom_sf"/>
</dbReference>
<dbReference type="NCBIfam" id="TIGR00036">
    <property type="entry name" value="dapB"/>
    <property type="match status" value="1"/>
</dbReference>
<dbReference type="PANTHER" id="PTHR20836:SF7">
    <property type="entry name" value="4-HYDROXY-TETRAHYDRODIPICOLINATE REDUCTASE"/>
    <property type="match status" value="1"/>
</dbReference>
<dbReference type="PANTHER" id="PTHR20836">
    <property type="entry name" value="DIHYDRODIPICOLINATE REDUCTASE"/>
    <property type="match status" value="1"/>
</dbReference>
<dbReference type="Pfam" id="PF05173">
    <property type="entry name" value="DapB_C"/>
    <property type="match status" value="1"/>
</dbReference>
<dbReference type="Pfam" id="PF01113">
    <property type="entry name" value="DapB_N"/>
    <property type="match status" value="1"/>
</dbReference>
<dbReference type="PIRSF" id="PIRSF000161">
    <property type="entry name" value="DHPR"/>
    <property type="match status" value="1"/>
</dbReference>
<dbReference type="SUPFAM" id="SSF55347">
    <property type="entry name" value="Glyceraldehyde-3-phosphate dehydrogenase-like, C-terminal domain"/>
    <property type="match status" value="1"/>
</dbReference>
<dbReference type="SUPFAM" id="SSF51735">
    <property type="entry name" value="NAD(P)-binding Rossmann-fold domains"/>
    <property type="match status" value="1"/>
</dbReference>
<dbReference type="PROSITE" id="PS01298">
    <property type="entry name" value="DAPB"/>
    <property type="match status" value="1"/>
</dbReference>
<organism>
    <name type="scientific">Staphylococcus aureus (strain JH9)</name>
    <dbReference type="NCBI Taxonomy" id="359786"/>
    <lineage>
        <taxon>Bacteria</taxon>
        <taxon>Bacillati</taxon>
        <taxon>Bacillota</taxon>
        <taxon>Bacilli</taxon>
        <taxon>Bacillales</taxon>
        <taxon>Staphylococcaceae</taxon>
        <taxon>Staphylococcus</taxon>
    </lineage>
</organism>